<name>GLMM_ACIBY</name>
<organism>
    <name type="scientific">Acinetobacter baumannii (strain AYE)</name>
    <dbReference type="NCBI Taxonomy" id="509173"/>
    <lineage>
        <taxon>Bacteria</taxon>
        <taxon>Pseudomonadati</taxon>
        <taxon>Pseudomonadota</taxon>
        <taxon>Gammaproteobacteria</taxon>
        <taxon>Moraxellales</taxon>
        <taxon>Moraxellaceae</taxon>
        <taxon>Acinetobacter</taxon>
        <taxon>Acinetobacter calcoaceticus/baumannii complex</taxon>
    </lineage>
</organism>
<keyword id="KW-0413">Isomerase</keyword>
<keyword id="KW-0460">Magnesium</keyword>
<keyword id="KW-0479">Metal-binding</keyword>
<keyword id="KW-0597">Phosphoprotein</keyword>
<protein>
    <recommendedName>
        <fullName evidence="1">Phosphoglucosamine mutase</fullName>
        <ecNumber evidence="1">5.4.2.10</ecNumber>
    </recommendedName>
</protein>
<dbReference type="EC" id="5.4.2.10" evidence="1"/>
<dbReference type="EMBL" id="CU459141">
    <property type="protein sequence ID" value="CAM85151.1"/>
    <property type="molecule type" value="Genomic_DNA"/>
</dbReference>
<dbReference type="RefSeq" id="WP_000119870.1">
    <property type="nucleotide sequence ID" value="NZ_JBDGFB010000004.1"/>
</dbReference>
<dbReference type="SMR" id="B0V9C8"/>
<dbReference type="EnsemblBacteria" id="CAM85151">
    <property type="protein sequence ID" value="CAM85151"/>
    <property type="gene ID" value="ABAYE0167"/>
</dbReference>
<dbReference type="KEGG" id="aby:ABAYE0167"/>
<dbReference type="HOGENOM" id="CLU_016950_7_0_6"/>
<dbReference type="GO" id="GO:0005829">
    <property type="term" value="C:cytosol"/>
    <property type="evidence" value="ECO:0007669"/>
    <property type="project" value="TreeGrafter"/>
</dbReference>
<dbReference type="GO" id="GO:0000287">
    <property type="term" value="F:magnesium ion binding"/>
    <property type="evidence" value="ECO:0007669"/>
    <property type="project" value="UniProtKB-UniRule"/>
</dbReference>
<dbReference type="GO" id="GO:0008966">
    <property type="term" value="F:phosphoglucosamine mutase activity"/>
    <property type="evidence" value="ECO:0007669"/>
    <property type="project" value="UniProtKB-UniRule"/>
</dbReference>
<dbReference type="GO" id="GO:0004615">
    <property type="term" value="F:phosphomannomutase activity"/>
    <property type="evidence" value="ECO:0007669"/>
    <property type="project" value="TreeGrafter"/>
</dbReference>
<dbReference type="GO" id="GO:0005975">
    <property type="term" value="P:carbohydrate metabolic process"/>
    <property type="evidence" value="ECO:0007669"/>
    <property type="project" value="InterPro"/>
</dbReference>
<dbReference type="GO" id="GO:0009252">
    <property type="term" value="P:peptidoglycan biosynthetic process"/>
    <property type="evidence" value="ECO:0007669"/>
    <property type="project" value="TreeGrafter"/>
</dbReference>
<dbReference type="GO" id="GO:0006048">
    <property type="term" value="P:UDP-N-acetylglucosamine biosynthetic process"/>
    <property type="evidence" value="ECO:0007669"/>
    <property type="project" value="TreeGrafter"/>
</dbReference>
<dbReference type="CDD" id="cd05802">
    <property type="entry name" value="GlmM"/>
    <property type="match status" value="1"/>
</dbReference>
<dbReference type="FunFam" id="3.30.310.50:FF:000001">
    <property type="entry name" value="Phosphoglucosamine mutase"/>
    <property type="match status" value="1"/>
</dbReference>
<dbReference type="FunFam" id="3.40.120.10:FF:000001">
    <property type="entry name" value="Phosphoglucosamine mutase"/>
    <property type="match status" value="1"/>
</dbReference>
<dbReference type="FunFam" id="3.40.120.10:FF:000003">
    <property type="entry name" value="Phosphoglucosamine mutase"/>
    <property type="match status" value="1"/>
</dbReference>
<dbReference type="Gene3D" id="3.40.120.10">
    <property type="entry name" value="Alpha-D-Glucose-1,6-Bisphosphate, subunit A, domain 3"/>
    <property type="match status" value="3"/>
</dbReference>
<dbReference type="Gene3D" id="3.30.310.50">
    <property type="entry name" value="Alpha-D-phosphohexomutase, C-terminal domain"/>
    <property type="match status" value="1"/>
</dbReference>
<dbReference type="HAMAP" id="MF_01554_B">
    <property type="entry name" value="GlmM_B"/>
    <property type="match status" value="1"/>
</dbReference>
<dbReference type="InterPro" id="IPR005844">
    <property type="entry name" value="A-D-PHexomutase_a/b/a-I"/>
</dbReference>
<dbReference type="InterPro" id="IPR016055">
    <property type="entry name" value="A-D-PHexomutase_a/b/a-I/II/III"/>
</dbReference>
<dbReference type="InterPro" id="IPR005845">
    <property type="entry name" value="A-D-PHexomutase_a/b/a-II"/>
</dbReference>
<dbReference type="InterPro" id="IPR005846">
    <property type="entry name" value="A-D-PHexomutase_a/b/a-III"/>
</dbReference>
<dbReference type="InterPro" id="IPR005843">
    <property type="entry name" value="A-D-PHexomutase_C"/>
</dbReference>
<dbReference type="InterPro" id="IPR036900">
    <property type="entry name" value="A-D-PHexomutase_C_sf"/>
</dbReference>
<dbReference type="InterPro" id="IPR016066">
    <property type="entry name" value="A-D-PHexomutase_CS"/>
</dbReference>
<dbReference type="InterPro" id="IPR005841">
    <property type="entry name" value="Alpha-D-phosphohexomutase_SF"/>
</dbReference>
<dbReference type="InterPro" id="IPR006352">
    <property type="entry name" value="GlmM_bact"/>
</dbReference>
<dbReference type="InterPro" id="IPR050060">
    <property type="entry name" value="Phosphoglucosamine_mutase"/>
</dbReference>
<dbReference type="NCBIfam" id="TIGR01455">
    <property type="entry name" value="glmM"/>
    <property type="match status" value="1"/>
</dbReference>
<dbReference type="NCBIfam" id="NF008139">
    <property type="entry name" value="PRK10887.1"/>
    <property type="match status" value="1"/>
</dbReference>
<dbReference type="PANTHER" id="PTHR42946:SF1">
    <property type="entry name" value="PHOSPHOGLUCOMUTASE (ALPHA-D-GLUCOSE-1,6-BISPHOSPHATE-DEPENDENT)"/>
    <property type="match status" value="1"/>
</dbReference>
<dbReference type="PANTHER" id="PTHR42946">
    <property type="entry name" value="PHOSPHOHEXOSE MUTASE"/>
    <property type="match status" value="1"/>
</dbReference>
<dbReference type="Pfam" id="PF02878">
    <property type="entry name" value="PGM_PMM_I"/>
    <property type="match status" value="1"/>
</dbReference>
<dbReference type="Pfam" id="PF02879">
    <property type="entry name" value="PGM_PMM_II"/>
    <property type="match status" value="1"/>
</dbReference>
<dbReference type="Pfam" id="PF02880">
    <property type="entry name" value="PGM_PMM_III"/>
    <property type="match status" value="1"/>
</dbReference>
<dbReference type="Pfam" id="PF00408">
    <property type="entry name" value="PGM_PMM_IV"/>
    <property type="match status" value="1"/>
</dbReference>
<dbReference type="PRINTS" id="PR00509">
    <property type="entry name" value="PGMPMM"/>
</dbReference>
<dbReference type="SUPFAM" id="SSF55957">
    <property type="entry name" value="Phosphoglucomutase, C-terminal domain"/>
    <property type="match status" value="1"/>
</dbReference>
<dbReference type="SUPFAM" id="SSF53738">
    <property type="entry name" value="Phosphoglucomutase, first 3 domains"/>
    <property type="match status" value="3"/>
</dbReference>
<dbReference type="PROSITE" id="PS00710">
    <property type="entry name" value="PGM_PMM"/>
    <property type="match status" value="1"/>
</dbReference>
<evidence type="ECO:0000255" key="1">
    <source>
        <dbReference type="HAMAP-Rule" id="MF_01554"/>
    </source>
</evidence>
<feature type="chain" id="PRO_1000201051" description="Phosphoglucosamine mutase">
    <location>
        <begin position="1"/>
        <end position="445"/>
    </location>
</feature>
<feature type="active site" description="Phosphoserine intermediate" evidence="1">
    <location>
        <position position="102"/>
    </location>
</feature>
<feature type="binding site" description="via phosphate group" evidence="1">
    <location>
        <position position="102"/>
    </location>
    <ligand>
        <name>Mg(2+)</name>
        <dbReference type="ChEBI" id="CHEBI:18420"/>
    </ligand>
</feature>
<feature type="binding site" evidence="1">
    <location>
        <position position="241"/>
    </location>
    <ligand>
        <name>Mg(2+)</name>
        <dbReference type="ChEBI" id="CHEBI:18420"/>
    </ligand>
</feature>
<feature type="binding site" evidence="1">
    <location>
        <position position="243"/>
    </location>
    <ligand>
        <name>Mg(2+)</name>
        <dbReference type="ChEBI" id="CHEBI:18420"/>
    </ligand>
</feature>
<feature type="binding site" evidence="1">
    <location>
        <position position="245"/>
    </location>
    <ligand>
        <name>Mg(2+)</name>
        <dbReference type="ChEBI" id="CHEBI:18420"/>
    </ligand>
</feature>
<feature type="modified residue" description="Phosphoserine" evidence="1">
    <location>
        <position position="102"/>
    </location>
</feature>
<gene>
    <name evidence="1" type="primary">glmM</name>
    <name type="ordered locus">ABAYE0167</name>
</gene>
<proteinExistence type="inferred from homology"/>
<accession>B0V9C8</accession>
<comment type="function">
    <text evidence="1">Catalyzes the conversion of glucosamine-6-phosphate to glucosamine-1-phosphate.</text>
</comment>
<comment type="catalytic activity">
    <reaction evidence="1">
        <text>alpha-D-glucosamine 1-phosphate = D-glucosamine 6-phosphate</text>
        <dbReference type="Rhea" id="RHEA:23424"/>
        <dbReference type="ChEBI" id="CHEBI:58516"/>
        <dbReference type="ChEBI" id="CHEBI:58725"/>
        <dbReference type="EC" id="5.4.2.10"/>
    </reaction>
</comment>
<comment type="cofactor">
    <cofactor evidence="1">
        <name>Mg(2+)</name>
        <dbReference type="ChEBI" id="CHEBI:18420"/>
    </cofactor>
    <text evidence="1">Binds 1 Mg(2+) ion per subunit.</text>
</comment>
<comment type="PTM">
    <text evidence="1">Activated by phosphorylation.</text>
</comment>
<comment type="similarity">
    <text evidence="1">Belongs to the phosphohexose mutase family.</text>
</comment>
<reference key="1">
    <citation type="journal article" date="2008" name="PLoS ONE">
        <title>Comparative analysis of Acinetobacters: three genomes for three lifestyles.</title>
        <authorList>
            <person name="Vallenet D."/>
            <person name="Nordmann P."/>
            <person name="Barbe V."/>
            <person name="Poirel L."/>
            <person name="Mangenot S."/>
            <person name="Bataille E."/>
            <person name="Dossat C."/>
            <person name="Gas S."/>
            <person name="Kreimeyer A."/>
            <person name="Lenoble P."/>
            <person name="Oztas S."/>
            <person name="Poulain J."/>
            <person name="Segurens B."/>
            <person name="Robert C."/>
            <person name="Abergel C."/>
            <person name="Claverie J.-M."/>
            <person name="Raoult D."/>
            <person name="Medigue C."/>
            <person name="Weissenbach J."/>
            <person name="Cruveiller S."/>
        </authorList>
    </citation>
    <scope>NUCLEOTIDE SEQUENCE [LARGE SCALE GENOMIC DNA]</scope>
    <source>
        <strain>AYE</strain>
    </source>
</reference>
<sequence length="445" mass="48162">MSYFGTDGIRGKFGQMPITPEFALKLGFAAGKVLKRTSPKNKPLVVLGKDTRLSGYILESALQAGLNAAGVYVHLLGPLPTPAIAHLTRALHAHAGIVISASHNPYFDNGIKFFSSEGKKLPDSLQEEINKELEKDLFIEDTANLGKSVRVTDANGRYIEFCKSTFPYHFDLNNLKIVVDCAHGAAYSVGPSVFRELGAKVVALYNEPDGLNINENCGSTHPESLQKAVVEHGADLGIAFDGDADRVVMVDKFGNLIDGDHILYILATQAKNKPAGVVGTVMSNMALEVALEKANVGFVRAKVGDRYVLQALEENGWVTGGEPSGHILTLDKSTTGDAIIAALQVLTVMVEQNKALHELVNGFKLYPQVLVNVRLEQMLDPYSIPALVAEFNKAEEQLKGRGRILIRKSGTEPVIRVMVEGDNEQEVKTLAEHLANAVRSQAQVA</sequence>